<sequence length="141" mass="16214">MLTEKTKKELIRLSKVNNYIIKVETNQNFKHQSKCGDQILFQIIETNNGKFNLKHHASGCIVLLASANALNKLCNNKAKSEILNLVQKVINSNFANLDEIDVSLKIFNVFTNTNRKDCFLLPYKSLKDSLESYKPLRRTIR</sequence>
<name>Y085_BORBU</name>
<keyword id="KW-1185">Reference proteome</keyword>
<proteinExistence type="predicted"/>
<protein>
    <recommendedName>
        <fullName>Uncharacterized protein BB_0085</fullName>
    </recommendedName>
</protein>
<dbReference type="EMBL" id="AE000783">
    <property type="protein sequence ID" value="AAC66475.1"/>
    <property type="molecule type" value="Genomic_DNA"/>
</dbReference>
<dbReference type="PIR" id="E70110">
    <property type="entry name" value="E70110"/>
</dbReference>
<dbReference type="RefSeq" id="NP_212219.1">
    <property type="nucleotide sequence ID" value="NC_001318.1"/>
</dbReference>
<dbReference type="RefSeq" id="WP_010889679.1">
    <property type="nucleotide sequence ID" value="NC_001318.1"/>
</dbReference>
<dbReference type="SMR" id="O51112"/>
<dbReference type="STRING" id="224326.BB_0085"/>
<dbReference type="PaxDb" id="224326-BB_0085"/>
<dbReference type="EnsemblBacteria" id="AAC66475">
    <property type="protein sequence ID" value="AAC66475"/>
    <property type="gene ID" value="BB_0085"/>
</dbReference>
<dbReference type="KEGG" id="bbu:BB_0085"/>
<dbReference type="PATRIC" id="fig|224326.49.peg.483"/>
<dbReference type="HOGENOM" id="CLU_1892144_0_0_12"/>
<dbReference type="OrthoDB" id="350747at2"/>
<dbReference type="Proteomes" id="UP000001807">
    <property type="component" value="Chromosome"/>
</dbReference>
<dbReference type="GO" id="GO:0005506">
    <property type="term" value="F:iron ion binding"/>
    <property type="evidence" value="ECO:0007669"/>
    <property type="project" value="InterPro"/>
</dbReference>
<dbReference type="GO" id="GO:0051536">
    <property type="term" value="F:iron-sulfur cluster binding"/>
    <property type="evidence" value="ECO:0007669"/>
    <property type="project" value="InterPro"/>
</dbReference>
<dbReference type="GO" id="GO:0016226">
    <property type="term" value="P:iron-sulfur cluster assembly"/>
    <property type="evidence" value="ECO:0007669"/>
    <property type="project" value="InterPro"/>
</dbReference>
<dbReference type="CDD" id="cd06664">
    <property type="entry name" value="IscU_like"/>
    <property type="match status" value="1"/>
</dbReference>
<dbReference type="Gene3D" id="3.90.1010.10">
    <property type="match status" value="1"/>
</dbReference>
<dbReference type="InterPro" id="IPR002871">
    <property type="entry name" value="NIF_FeS_clus_asmbl_NifU_N"/>
</dbReference>
<dbReference type="SUPFAM" id="SSF82649">
    <property type="entry name" value="SufE/NifU"/>
    <property type="match status" value="1"/>
</dbReference>
<gene>
    <name type="ordered locus">BB_0085</name>
</gene>
<accession>O51112</accession>
<organism>
    <name type="scientific">Borreliella burgdorferi (strain ATCC 35210 / DSM 4680 / CIP 102532 / B31)</name>
    <name type="common">Borrelia burgdorferi</name>
    <dbReference type="NCBI Taxonomy" id="224326"/>
    <lineage>
        <taxon>Bacteria</taxon>
        <taxon>Pseudomonadati</taxon>
        <taxon>Spirochaetota</taxon>
        <taxon>Spirochaetia</taxon>
        <taxon>Spirochaetales</taxon>
        <taxon>Borreliaceae</taxon>
        <taxon>Borreliella</taxon>
    </lineage>
</organism>
<reference key="1">
    <citation type="journal article" date="1997" name="Nature">
        <title>Genomic sequence of a Lyme disease spirochaete, Borrelia burgdorferi.</title>
        <authorList>
            <person name="Fraser C.M."/>
            <person name="Casjens S."/>
            <person name="Huang W.M."/>
            <person name="Sutton G.G."/>
            <person name="Clayton R.A."/>
            <person name="Lathigra R."/>
            <person name="White O."/>
            <person name="Ketchum K.A."/>
            <person name="Dodson R.J."/>
            <person name="Hickey E.K."/>
            <person name="Gwinn M.L."/>
            <person name="Dougherty B.A."/>
            <person name="Tomb J.-F."/>
            <person name="Fleischmann R.D."/>
            <person name="Richardson D.L."/>
            <person name="Peterson J.D."/>
            <person name="Kerlavage A.R."/>
            <person name="Quackenbush J."/>
            <person name="Salzberg S.L."/>
            <person name="Hanson M."/>
            <person name="van Vugt R."/>
            <person name="Palmer N."/>
            <person name="Adams M.D."/>
            <person name="Gocayne J.D."/>
            <person name="Weidman J.F."/>
            <person name="Utterback T.R."/>
            <person name="Watthey L."/>
            <person name="McDonald L.A."/>
            <person name="Artiach P."/>
            <person name="Bowman C."/>
            <person name="Garland S.A."/>
            <person name="Fujii C."/>
            <person name="Cotton M.D."/>
            <person name="Horst K."/>
            <person name="Roberts K.M."/>
            <person name="Hatch B."/>
            <person name="Smith H.O."/>
            <person name="Venter J.C."/>
        </authorList>
    </citation>
    <scope>NUCLEOTIDE SEQUENCE [LARGE SCALE GENOMIC DNA]</scope>
    <source>
        <strain>ATCC 35210 / DSM 4680 / CIP 102532 / B31</strain>
    </source>
</reference>
<feature type="chain" id="PRO_0000174380" description="Uncharacterized protein BB_0085">
    <location>
        <begin position="1"/>
        <end position="141"/>
    </location>
</feature>